<comment type="function">
    <text evidence="1">Sigma factors are initiation factors that promote the attachment of RNA polymerase to specific initiation sites and are then released. This sigma factor is the master transcriptional regulator of the stationary phase and the general stress response.</text>
</comment>
<comment type="subunit">
    <text evidence="1">Interacts with the RNA polymerase core enzyme.</text>
</comment>
<comment type="subcellular location">
    <subcellularLocation>
        <location evidence="1">Cytoplasm</location>
    </subcellularLocation>
</comment>
<comment type="developmental stage">
    <text evidence="3">Found in the large cell variant (LCV) stage, very little is present in the small cell variant (SCV) stage (at protein level). LCVs are more metabolically active than SCVs.</text>
</comment>
<comment type="similarity">
    <text evidence="1">Belongs to the sigma-70 factor family. RpoS subfamily.</text>
</comment>
<protein>
    <recommendedName>
        <fullName evidence="1">RNA polymerase sigma factor RpoS</fullName>
    </recommendedName>
    <alternativeName>
        <fullName evidence="1">Sigma S</fullName>
    </alternativeName>
    <alternativeName>
        <fullName evidence="1">Sigma-38</fullName>
    </alternativeName>
</protein>
<reference key="1">
    <citation type="journal article" date="2001" name="Infect. Immun.">
        <title>Characterization of a stress-induced alternate sigma factor, RpoS, of Coxiella burnetii and its expression during the development cycle.</title>
        <authorList>
            <person name="Seshadri R."/>
            <person name="Samuel J.E."/>
        </authorList>
    </citation>
    <scope>NUCLEOTIDE SEQUENCE [GENOMIC DNA]</scope>
    <scope>DEVELOPMENTAL STAGE</scope>
    <source>
        <strain>RSA 493 / Nine Mile phase I</strain>
    </source>
</reference>
<reference key="2">
    <citation type="journal article" date="2003" name="Proc. Natl. Acad. Sci. U.S.A.">
        <title>Complete genome sequence of the Q-fever pathogen, Coxiella burnetii.</title>
        <authorList>
            <person name="Seshadri R."/>
            <person name="Paulsen I.T."/>
            <person name="Eisen J.A."/>
            <person name="Read T.D."/>
            <person name="Nelson K.E."/>
            <person name="Nelson W.C."/>
            <person name="Ward N.L."/>
            <person name="Tettelin H."/>
            <person name="Davidsen T.M."/>
            <person name="Beanan M.J."/>
            <person name="DeBoy R.T."/>
            <person name="Daugherty S.C."/>
            <person name="Brinkac L.M."/>
            <person name="Madupu R."/>
            <person name="Dodson R.J."/>
            <person name="Khouri H.M."/>
            <person name="Lee K.H."/>
            <person name="Carty H.A."/>
            <person name="Scanlan D."/>
            <person name="Heinzen R.A."/>
            <person name="Thompson H.A."/>
            <person name="Samuel J.E."/>
            <person name="Fraser C.M."/>
            <person name="Heidelberg J.F."/>
        </authorList>
    </citation>
    <scope>NUCLEOTIDE SEQUENCE [LARGE SCALE GENOMIC DNA]</scope>
    <source>
        <strain>RSA 493 / Nine Mile phase I</strain>
    </source>
</reference>
<keyword id="KW-0963">Cytoplasm</keyword>
<keyword id="KW-0238">DNA-binding</keyword>
<keyword id="KW-1185">Reference proteome</keyword>
<keyword id="KW-0731">Sigma factor</keyword>
<keyword id="KW-0804">Transcription</keyword>
<keyword id="KW-0805">Transcription regulation</keyword>
<dbReference type="EMBL" id="AF244357">
    <property type="protein sequence ID" value="AAF61172.1"/>
    <property type="molecule type" value="Genomic_DNA"/>
</dbReference>
<dbReference type="EMBL" id="AE016828">
    <property type="protein sequence ID" value="AAO91165.1"/>
    <property type="molecule type" value="Genomic_DNA"/>
</dbReference>
<dbReference type="RefSeq" id="NP_820651.1">
    <property type="nucleotide sequence ID" value="NC_002971.4"/>
</dbReference>
<dbReference type="RefSeq" id="WP_010958362.1">
    <property type="nucleotide sequence ID" value="NC_002971.4"/>
</dbReference>
<dbReference type="SMR" id="Q9KI19"/>
<dbReference type="STRING" id="227377.CBU_1669"/>
<dbReference type="EnsemblBacteria" id="AAO91165">
    <property type="protein sequence ID" value="AAO91165"/>
    <property type="gene ID" value="CBU_1669"/>
</dbReference>
<dbReference type="GeneID" id="1209580"/>
<dbReference type="KEGG" id="cbu:CBU_1669"/>
<dbReference type="PATRIC" id="fig|227377.7.peg.1659"/>
<dbReference type="eggNOG" id="COG0568">
    <property type="taxonomic scope" value="Bacteria"/>
</dbReference>
<dbReference type="HOGENOM" id="CLU_014793_3_5_6"/>
<dbReference type="OrthoDB" id="9809557at2"/>
<dbReference type="Proteomes" id="UP000002671">
    <property type="component" value="Chromosome"/>
</dbReference>
<dbReference type="GO" id="GO:0005737">
    <property type="term" value="C:cytoplasm"/>
    <property type="evidence" value="ECO:0007669"/>
    <property type="project" value="UniProtKB-SubCell"/>
</dbReference>
<dbReference type="GO" id="GO:0003677">
    <property type="term" value="F:DNA binding"/>
    <property type="evidence" value="ECO:0007669"/>
    <property type="project" value="UniProtKB-UniRule"/>
</dbReference>
<dbReference type="GO" id="GO:0016987">
    <property type="term" value="F:sigma factor activity"/>
    <property type="evidence" value="ECO:0007669"/>
    <property type="project" value="UniProtKB-UniRule"/>
</dbReference>
<dbReference type="GO" id="GO:0006352">
    <property type="term" value="P:DNA-templated transcription initiation"/>
    <property type="evidence" value="ECO:0007669"/>
    <property type="project" value="UniProtKB-UniRule"/>
</dbReference>
<dbReference type="CDD" id="cd06171">
    <property type="entry name" value="Sigma70_r4"/>
    <property type="match status" value="1"/>
</dbReference>
<dbReference type="FunFam" id="1.10.601.10:FF:000001">
    <property type="entry name" value="RNA polymerase sigma factor SigA"/>
    <property type="match status" value="1"/>
</dbReference>
<dbReference type="Gene3D" id="1.10.601.10">
    <property type="entry name" value="RNA Polymerase Primary Sigma Factor"/>
    <property type="match status" value="1"/>
</dbReference>
<dbReference type="Gene3D" id="1.10.10.10">
    <property type="entry name" value="Winged helix-like DNA-binding domain superfamily/Winged helix DNA-binding domain"/>
    <property type="match status" value="2"/>
</dbReference>
<dbReference type="HAMAP" id="MF_00959">
    <property type="entry name" value="Sigma70_RpoS"/>
    <property type="match status" value="1"/>
</dbReference>
<dbReference type="InterPro" id="IPR014284">
    <property type="entry name" value="RNA_pol_sigma-70_dom"/>
</dbReference>
<dbReference type="InterPro" id="IPR000943">
    <property type="entry name" value="RNA_pol_sigma70"/>
</dbReference>
<dbReference type="InterPro" id="IPR009042">
    <property type="entry name" value="RNA_pol_sigma70_r1_2"/>
</dbReference>
<dbReference type="InterPro" id="IPR007627">
    <property type="entry name" value="RNA_pol_sigma70_r2"/>
</dbReference>
<dbReference type="InterPro" id="IPR007624">
    <property type="entry name" value="RNA_pol_sigma70_r3"/>
</dbReference>
<dbReference type="InterPro" id="IPR007630">
    <property type="entry name" value="RNA_pol_sigma70_r4"/>
</dbReference>
<dbReference type="InterPro" id="IPR013325">
    <property type="entry name" value="RNA_pol_sigma_r2"/>
</dbReference>
<dbReference type="InterPro" id="IPR013324">
    <property type="entry name" value="RNA_pol_sigma_r3/r4-like"/>
</dbReference>
<dbReference type="InterPro" id="IPR012761">
    <property type="entry name" value="RNA_pol_sigma_RpoS"/>
</dbReference>
<dbReference type="InterPro" id="IPR050239">
    <property type="entry name" value="Sigma-70_RNA_pol_init_factors"/>
</dbReference>
<dbReference type="InterPro" id="IPR036388">
    <property type="entry name" value="WH-like_DNA-bd_sf"/>
</dbReference>
<dbReference type="NCBIfam" id="NF004207">
    <property type="entry name" value="PRK05657.1"/>
    <property type="match status" value="1"/>
</dbReference>
<dbReference type="NCBIfam" id="TIGR02394">
    <property type="entry name" value="rpoS_proteo"/>
    <property type="match status" value="1"/>
</dbReference>
<dbReference type="NCBIfam" id="TIGR02937">
    <property type="entry name" value="sigma70-ECF"/>
    <property type="match status" value="1"/>
</dbReference>
<dbReference type="PANTHER" id="PTHR30603">
    <property type="entry name" value="RNA POLYMERASE SIGMA FACTOR RPO"/>
    <property type="match status" value="1"/>
</dbReference>
<dbReference type="PANTHER" id="PTHR30603:SF67">
    <property type="entry name" value="RNA POLYMERASE SIGMA FACTOR RPOS"/>
    <property type="match status" value="1"/>
</dbReference>
<dbReference type="Pfam" id="PF00140">
    <property type="entry name" value="Sigma70_r1_2"/>
    <property type="match status" value="1"/>
</dbReference>
<dbReference type="Pfam" id="PF04542">
    <property type="entry name" value="Sigma70_r2"/>
    <property type="match status" value="1"/>
</dbReference>
<dbReference type="Pfam" id="PF04539">
    <property type="entry name" value="Sigma70_r3"/>
    <property type="match status" value="1"/>
</dbReference>
<dbReference type="Pfam" id="PF04545">
    <property type="entry name" value="Sigma70_r4"/>
    <property type="match status" value="1"/>
</dbReference>
<dbReference type="PRINTS" id="PR00046">
    <property type="entry name" value="SIGMA70FCT"/>
</dbReference>
<dbReference type="SUPFAM" id="SSF88946">
    <property type="entry name" value="Sigma2 domain of RNA polymerase sigma factors"/>
    <property type="match status" value="1"/>
</dbReference>
<dbReference type="SUPFAM" id="SSF88659">
    <property type="entry name" value="Sigma3 and sigma4 domains of RNA polymerase sigma factors"/>
    <property type="match status" value="2"/>
</dbReference>
<dbReference type="PROSITE" id="PS00715">
    <property type="entry name" value="SIGMA70_1"/>
    <property type="match status" value="1"/>
</dbReference>
<gene>
    <name evidence="1" type="primary">rpoS</name>
    <name type="ordered locus">CBU_1669</name>
</gene>
<evidence type="ECO:0000255" key="1">
    <source>
        <dbReference type="HAMAP-Rule" id="MF_00959"/>
    </source>
</evidence>
<evidence type="ECO:0000256" key="2">
    <source>
        <dbReference type="SAM" id="MobiDB-lite"/>
    </source>
</evidence>
<evidence type="ECO:0000269" key="3">
    <source>
    </source>
</evidence>
<feature type="chain" id="PRO_0000318558" description="RNA polymerase sigma factor RpoS">
    <location>
        <begin position="1"/>
        <end position="352"/>
    </location>
</feature>
<feature type="DNA-binding region" description="H-T-H motif" evidence="1">
    <location>
        <begin position="311"/>
        <end position="330"/>
    </location>
</feature>
<feature type="region of interest" description="Disordered" evidence="2">
    <location>
        <begin position="1"/>
        <end position="78"/>
    </location>
</feature>
<feature type="region of interest" description="Sigma-70 factor domain-1" evidence="1">
    <location>
        <begin position="79"/>
        <end position="112"/>
    </location>
</feature>
<feature type="region of interest" description="Sigma-70 factor domain-2" evidence="1">
    <location>
        <begin position="117"/>
        <end position="187"/>
    </location>
</feature>
<feature type="region of interest" description="Sigma-70 factor domain-3" evidence="1">
    <location>
        <begin position="197"/>
        <end position="272"/>
    </location>
</feature>
<feature type="region of interest" description="Sigma-70 factor domain-4" evidence="1">
    <location>
        <begin position="285"/>
        <end position="338"/>
    </location>
</feature>
<feature type="short sequence motif" description="Interaction with polymerase core subunit RpoC">
    <location>
        <begin position="141"/>
        <end position="144"/>
    </location>
</feature>
<feature type="compositionally biased region" description="Basic residues" evidence="2">
    <location>
        <begin position="1"/>
        <end position="38"/>
    </location>
</feature>
<proteinExistence type="evidence at protein level"/>
<accession>Q9KI19</accession>
<accession>Q7C3E6</accession>
<sequence length="352" mass="40471">MKTKTTKKTIKKAAKKIKKPSKRKIKKTAKKSRPKKPIKASDHGLIFAKTKKETTEKEDAELANAKAKTKKRRETRSSDPTQIYLRELGFQPLLNAKEELKIARRVHKGDPKARKQMIEANLRLVVKIARHYVNRGLPFLDLIEEGNLGLLTAVEKFDPERGFRFSTYATWWIRQTIERAIMNQSRTVRLPIHVIKELNVYLRTAKKLTQEVDHEATPEDVAHLIDKPVQEIRRIMDLAPSATSIDVPISEDGQKSLVDTLADDNNIDPARLIQNVDLQDHIERWLAQLDERHREVVILRFGLHENEKGTLEAVGKAVGLTRERVRQIQIDALQQLRHILEMEGVTGEEVED</sequence>
<organism>
    <name type="scientific">Coxiella burnetii (strain RSA 493 / Nine Mile phase I)</name>
    <dbReference type="NCBI Taxonomy" id="227377"/>
    <lineage>
        <taxon>Bacteria</taxon>
        <taxon>Pseudomonadati</taxon>
        <taxon>Pseudomonadota</taxon>
        <taxon>Gammaproteobacteria</taxon>
        <taxon>Legionellales</taxon>
        <taxon>Coxiellaceae</taxon>
        <taxon>Coxiella</taxon>
    </lineage>
</organism>
<name>RPOS_COXBU</name>